<gene>
    <name type="ordered locus">Rv2627c</name>
</gene>
<sequence length="413" mass="46252">MASSASDGTHERSAFRLSPPVLSGAMGPFMHTGLYVAQSWRDYLGQQPDKLPIARPTIALAAQAFRDEIVLLGLKARRPVSNHRVFERISQEVAAGLEFYGNRRWLEKPSGFFAQPPPLTEVAVRKVKDRRRSFYRIFFDSGFTPHPGEPGSQRWLSYTANNREYALLLRHPEPRPWLVCVHGTEMGRAPLDLAVFRAWKLHDELGLNIVMPVLPMHGPRGQGLPKGAVFPGEDVLDDVHGTAQAVWDIRRLLSWIRSQEEESLIGLNGLSLGGYIASLVASLEEGLACAILGVPVADLIELLGRHCGLRHKDPRRHTVKMAEPIGRMISPLSLTPLVPMPGRFIYAGIADRLVHPREQVTRLWEHWGKPEIVWYPGGHTGFFQSRPVRRFVQAALEQSGLLDAPRTQRDRSA</sequence>
<evidence type="ECO:0000269" key="1">
    <source>
    </source>
</evidence>
<evidence type="ECO:0000269" key="2">
    <source>
    </source>
</evidence>
<evidence type="ECO:0000269" key="3">
    <source>
    </source>
</evidence>
<evidence type="ECO:0000269" key="4">
    <source>
    </source>
</evidence>
<evidence type="ECO:0000269" key="5">
    <source>
    </source>
</evidence>
<reference key="1">
    <citation type="journal article" date="1998" name="Nature">
        <title>Deciphering the biology of Mycobacterium tuberculosis from the complete genome sequence.</title>
        <authorList>
            <person name="Cole S.T."/>
            <person name="Brosch R."/>
            <person name="Parkhill J."/>
            <person name="Garnier T."/>
            <person name="Churcher C.M."/>
            <person name="Harris D.E."/>
            <person name="Gordon S.V."/>
            <person name="Eiglmeier K."/>
            <person name="Gas S."/>
            <person name="Barry C.E. III"/>
            <person name="Tekaia F."/>
            <person name="Badcock K."/>
            <person name="Basham D."/>
            <person name="Brown D."/>
            <person name="Chillingworth T."/>
            <person name="Connor R."/>
            <person name="Davies R.M."/>
            <person name="Devlin K."/>
            <person name="Feltwell T."/>
            <person name="Gentles S."/>
            <person name="Hamlin N."/>
            <person name="Holroyd S."/>
            <person name="Hornsby T."/>
            <person name="Jagels K."/>
            <person name="Krogh A."/>
            <person name="McLean J."/>
            <person name="Moule S."/>
            <person name="Murphy L.D."/>
            <person name="Oliver S."/>
            <person name="Osborne J."/>
            <person name="Quail M.A."/>
            <person name="Rajandream M.A."/>
            <person name="Rogers J."/>
            <person name="Rutter S."/>
            <person name="Seeger K."/>
            <person name="Skelton S."/>
            <person name="Squares S."/>
            <person name="Squares R."/>
            <person name="Sulston J.E."/>
            <person name="Taylor K."/>
            <person name="Whitehead S."/>
            <person name="Barrell B.G."/>
        </authorList>
    </citation>
    <scope>NUCLEOTIDE SEQUENCE [LARGE SCALE GENOMIC DNA]</scope>
    <source>
        <strain>ATCC 25618 / H37Rv</strain>
    </source>
</reference>
<reference key="2">
    <citation type="journal article" date="2001" name="Proc. Natl. Acad. Sci. U.S.A.">
        <title>Regulation of the Mycobacterium tuberculosis hypoxic response gene encoding alpha -crystallin.</title>
        <authorList>
            <person name="Sherman D.R."/>
            <person name="Voskuil M."/>
            <person name="Schnappinger D."/>
            <person name="Liao R."/>
            <person name="Harrell M.I."/>
            <person name="Schoolnik G.K."/>
        </authorList>
    </citation>
    <scope>INDUCTION BY HYPOXIA</scope>
    <source>
        <strain>ATCC 25618 / H37Rv</strain>
    </source>
</reference>
<reference key="3">
    <citation type="journal article" date="2003" name="J. Exp. Med.">
        <title>Inhibition of respiration by nitric oxide induces a Mycobacterium tuberculosis dormancy program.</title>
        <authorList>
            <person name="Voskuil M.I."/>
            <person name="Schnappinger D."/>
            <person name="Visconti K.C."/>
            <person name="Harrell M.I."/>
            <person name="Dolganov G.M."/>
            <person name="Sherman D.R."/>
            <person name="Schoolnik G.K."/>
        </authorList>
    </citation>
    <scope>INDUCTION BY NITRIC OXIDE (NO) AND BY HYPOXIA</scope>
    <scope>DORMANCY REGULON</scope>
    <source>
        <strain>ATCC 25618 / H37Rv</strain>
    </source>
</reference>
<reference key="4">
    <citation type="journal article" date="2006" name="Microbes Infect.">
        <title>Human T-cell responses to 25 novel antigens encoded by genes of the dormancy regulon of Mycobacterium tuberculosis.</title>
        <authorList>
            <person name="Leyten E.M."/>
            <person name="Lin M.Y."/>
            <person name="Franken K.L."/>
            <person name="Friggen A.H."/>
            <person name="Prins C."/>
            <person name="van Meijgaarden K.E."/>
            <person name="Voskuil M.I."/>
            <person name="Weldingh K."/>
            <person name="Andersen P."/>
            <person name="Schoolnik G.K."/>
            <person name="Arend S.M."/>
            <person name="Ottenhoff T.H."/>
            <person name="Klein M.R."/>
        </authorList>
    </citation>
    <scope>BIOTECHNOLOGY</scope>
</reference>
<reference key="5">
    <citation type="journal article" date="2008" name="Cell Host Microbe">
        <title>Mycobacterium tuberculosis senses host-derived carbon monoxide during macrophage infection.</title>
        <authorList>
            <person name="Shiloh M.U."/>
            <person name="Manzanillo P."/>
            <person name="Cox J.S."/>
        </authorList>
    </citation>
    <scope>INDUCTION BY CARBON MONOXIDE (CO)</scope>
    <source>
        <strain>ATCC 35801 / TMC 107 / Erdman</strain>
    </source>
</reference>
<reference key="6">
    <citation type="journal article" date="2008" name="J. Biol. Chem.">
        <title>Heme oxygenase-1-derived carbon monoxide induces the Mycobacterium tuberculosis dormancy regulon.</title>
        <authorList>
            <person name="Kumar A."/>
            <person name="Deshane J.S."/>
            <person name="Crossman D.K."/>
            <person name="Bolisetty S."/>
            <person name="Yan B.S."/>
            <person name="Kramnik I."/>
            <person name="Agarwal A."/>
            <person name="Steyn A.J."/>
        </authorList>
    </citation>
    <scope>INDUCTION BY CARBON MONOXIDE (CO)</scope>
    <scope>DORMANCY REGULON</scope>
    <source>
        <strain>ATCC 25618 / H37Rv</strain>
    </source>
</reference>
<reference key="7">
    <citation type="journal article" date="2011" name="Mol. Cell. Proteomics">
        <title>Proteogenomic analysis of Mycobacterium tuberculosis by high resolution mass spectrometry.</title>
        <authorList>
            <person name="Kelkar D.S."/>
            <person name="Kumar D."/>
            <person name="Kumar P."/>
            <person name="Balakrishnan L."/>
            <person name="Muthusamy B."/>
            <person name="Yadav A.K."/>
            <person name="Shrivastava P."/>
            <person name="Marimuthu A."/>
            <person name="Anand S."/>
            <person name="Sundaram H."/>
            <person name="Kingsbury R."/>
            <person name="Harsha H.C."/>
            <person name="Nair B."/>
            <person name="Prasad T.S."/>
            <person name="Chauhan D.S."/>
            <person name="Katoch K."/>
            <person name="Katoch V.M."/>
            <person name="Kumar P."/>
            <person name="Chaerkady R."/>
            <person name="Ramachandran S."/>
            <person name="Dash D."/>
            <person name="Pandey A."/>
        </authorList>
    </citation>
    <scope>IDENTIFICATION BY MASS SPECTROMETRY [LARGE SCALE ANALYSIS]</scope>
    <source>
        <strain>ATCC 25618 / H37Rv</strain>
    </source>
</reference>
<comment type="induction">
    <text evidence="1 2 4 5">A member of the dormancy regulon. Induced in response to reduced oxygen tension (hypoxia), low levels of nitric oxide (NO) and carbon monoxide (CO). It is hoped that this regulon will give insight into the latent, or dormant phase of infection.</text>
</comment>
<comment type="biotechnology">
    <text evidence="3">Has strong T-cell and IFN-gamma inducing capacity in human tuberculin skin test positive patients, indicating this might be a good vaccine candidate.</text>
</comment>
<accession>P9WL67</accession>
<accession>L0TA72</accession>
<accession>O06185</accession>
<accession>Q7D6V3</accession>
<dbReference type="EMBL" id="AL123456">
    <property type="protein sequence ID" value="CCP45425.1"/>
    <property type="molecule type" value="Genomic_DNA"/>
</dbReference>
<dbReference type="PIR" id="B70573">
    <property type="entry name" value="B70573"/>
</dbReference>
<dbReference type="RefSeq" id="NP_217143.1">
    <property type="nucleotide sequence ID" value="NC_000962.3"/>
</dbReference>
<dbReference type="RefSeq" id="WP_010886153.1">
    <property type="nucleotide sequence ID" value="NC_000962.3"/>
</dbReference>
<dbReference type="SMR" id="P9WL67"/>
<dbReference type="STRING" id="83332.Rv2627c"/>
<dbReference type="ESTHER" id="myctu-RV2627C">
    <property type="family name" value="6_AlphaBeta_hydrolase"/>
</dbReference>
<dbReference type="PaxDb" id="83332-Rv2627c"/>
<dbReference type="DNASU" id="888568"/>
<dbReference type="GeneID" id="888568"/>
<dbReference type="KEGG" id="mtu:Rv2627c"/>
<dbReference type="PATRIC" id="fig|83332.12.peg.2937"/>
<dbReference type="TubercuList" id="Rv2627c"/>
<dbReference type="eggNOG" id="COG1073">
    <property type="taxonomic scope" value="Bacteria"/>
</dbReference>
<dbReference type="InParanoid" id="P9WL67"/>
<dbReference type="OrthoDB" id="4739610at2"/>
<dbReference type="PhylomeDB" id="P9WL67"/>
<dbReference type="Proteomes" id="UP000001584">
    <property type="component" value="Chromosome"/>
</dbReference>
<dbReference type="GO" id="GO:0005886">
    <property type="term" value="C:plasma membrane"/>
    <property type="evidence" value="ECO:0007005"/>
    <property type="project" value="MTBBASE"/>
</dbReference>
<dbReference type="Gene3D" id="3.40.50.1820">
    <property type="entry name" value="alpha/beta hydrolase"/>
    <property type="match status" value="1"/>
</dbReference>
<dbReference type="InterPro" id="IPR029058">
    <property type="entry name" value="AB_hydrolase_fold"/>
</dbReference>
<dbReference type="PANTHER" id="PTHR13617">
    <property type="entry name" value="PROTEIN ABHD18"/>
    <property type="match status" value="1"/>
</dbReference>
<dbReference type="PANTHER" id="PTHR13617:SF14">
    <property type="entry name" value="PROTEIN ABHD18"/>
    <property type="match status" value="1"/>
</dbReference>
<dbReference type="SUPFAM" id="SSF53474">
    <property type="entry name" value="alpha/beta-Hydrolases"/>
    <property type="match status" value="1"/>
</dbReference>
<organism>
    <name type="scientific">Mycobacterium tuberculosis (strain ATCC 25618 / H37Rv)</name>
    <dbReference type="NCBI Taxonomy" id="83332"/>
    <lineage>
        <taxon>Bacteria</taxon>
        <taxon>Bacillati</taxon>
        <taxon>Actinomycetota</taxon>
        <taxon>Actinomycetes</taxon>
        <taxon>Mycobacteriales</taxon>
        <taxon>Mycobacteriaceae</taxon>
        <taxon>Mycobacterium</taxon>
        <taxon>Mycobacterium tuberculosis complex</taxon>
    </lineage>
</organism>
<feature type="chain" id="PRO_0000392935" description="Uncharacterized protein Rv2627c">
    <location>
        <begin position="1"/>
        <end position="413"/>
    </location>
</feature>
<proteinExistence type="evidence at protein level"/>
<protein>
    <recommendedName>
        <fullName>Uncharacterized protein Rv2627c</fullName>
    </recommendedName>
</protein>
<name>Y2627_MYCTU</name>
<keyword id="KW-1185">Reference proteome</keyword>